<accession>A4KWA5</accession>
<protein>
    <recommendedName>
        <fullName>C-type lectin domain family 2 member D2</fullName>
    </recommendedName>
</protein>
<proteinExistence type="evidence at transcript level"/>
<evidence type="ECO:0000250" key="1"/>
<evidence type="ECO:0000255" key="2"/>
<evidence type="ECO:0000255" key="3">
    <source>
        <dbReference type="PROSITE-ProRule" id="PRU00040"/>
    </source>
</evidence>
<evidence type="ECO:0000256" key="4">
    <source>
        <dbReference type="SAM" id="MobiDB-lite"/>
    </source>
</evidence>
<gene>
    <name type="primary">Clec2d2</name>
</gene>
<organism>
    <name type="scientific">Rattus norvegicus</name>
    <name type="common">Rat</name>
    <dbReference type="NCBI Taxonomy" id="10116"/>
    <lineage>
        <taxon>Eukaryota</taxon>
        <taxon>Metazoa</taxon>
        <taxon>Chordata</taxon>
        <taxon>Craniata</taxon>
        <taxon>Vertebrata</taxon>
        <taxon>Euteleostomi</taxon>
        <taxon>Mammalia</taxon>
        <taxon>Eutheria</taxon>
        <taxon>Euarchontoglires</taxon>
        <taxon>Glires</taxon>
        <taxon>Rodentia</taxon>
        <taxon>Myomorpha</taxon>
        <taxon>Muroidea</taxon>
        <taxon>Muridae</taxon>
        <taxon>Murinae</taxon>
        <taxon>Rattus</taxon>
    </lineage>
</organism>
<dbReference type="EMBL" id="EF100686">
    <property type="protein sequence ID" value="ABO15826.1"/>
    <property type="molecule type" value="mRNA"/>
</dbReference>
<dbReference type="RefSeq" id="NP_001078871.1">
    <property type="nucleotide sequence ID" value="NM_001085402.2"/>
</dbReference>
<dbReference type="RefSeq" id="XP_017448197.1">
    <property type="nucleotide sequence ID" value="XM_017592708.1"/>
</dbReference>
<dbReference type="SMR" id="A4KWA5"/>
<dbReference type="FunCoup" id="A4KWA5">
    <property type="interactions" value="55"/>
</dbReference>
<dbReference type="STRING" id="10116.ENSRNOP00000035114"/>
<dbReference type="GlyCosmos" id="A4KWA5">
    <property type="glycosylation" value="1 site, No reported glycans"/>
</dbReference>
<dbReference type="GlyGen" id="A4KWA5">
    <property type="glycosylation" value="1 site"/>
</dbReference>
<dbReference type="Ensembl" id="ENSRNOT00000038801.7">
    <property type="protein sequence ID" value="ENSRNOP00000035114.4"/>
    <property type="gene ID" value="ENSRNOG00000059890.2"/>
</dbReference>
<dbReference type="GeneID" id="362445"/>
<dbReference type="KEGG" id="rno:362445"/>
<dbReference type="UCSC" id="RGD:1562831">
    <property type="organism name" value="rat"/>
</dbReference>
<dbReference type="AGR" id="RGD:1562831"/>
<dbReference type="CTD" id="362445"/>
<dbReference type="RGD" id="1562831">
    <property type="gene designation" value="Clec2d2"/>
</dbReference>
<dbReference type="GeneTree" id="ENSGT00940000155319"/>
<dbReference type="HOGENOM" id="CLU_049894_8_1_1"/>
<dbReference type="InParanoid" id="A4KWA5"/>
<dbReference type="OMA" id="DRRWICN"/>
<dbReference type="OrthoDB" id="8935730at2759"/>
<dbReference type="PhylomeDB" id="A4KWA5"/>
<dbReference type="TreeFam" id="TF351467"/>
<dbReference type="PRO" id="PR:A4KWA5"/>
<dbReference type="Proteomes" id="UP000002494">
    <property type="component" value="Chromosome 4"/>
</dbReference>
<dbReference type="Bgee" id="ENSRNOG00000059890">
    <property type="expression patterns" value="Expressed in ovary and 7 other cell types or tissues"/>
</dbReference>
<dbReference type="GO" id="GO:0009897">
    <property type="term" value="C:external side of plasma membrane"/>
    <property type="evidence" value="ECO:0000318"/>
    <property type="project" value="GO_Central"/>
</dbReference>
<dbReference type="GO" id="GO:0030246">
    <property type="term" value="F:carbohydrate binding"/>
    <property type="evidence" value="ECO:0007669"/>
    <property type="project" value="UniProtKB-KW"/>
</dbReference>
<dbReference type="GO" id="GO:0046703">
    <property type="term" value="F:natural killer cell lectin-like receptor binding"/>
    <property type="evidence" value="ECO:0000318"/>
    <property type="project" value="GO_Central"/>
</dbReference>
<dbReference type="CDD" id="cd03593">
    <property type="entry name" value="CLECT_NK_receptors_like"/>
    <property type="match status" value="1"/>
</dbReference>
<dbReference type="Gene3D" id="3.10.100.10">
    <property type="entry name" value="Mannose-Binding Protein A, subunit A"/>
    <property type="match status" value="1"/>
</dbReference>
<dbReference type="InterPro" id="IPR001304">
    <property type="entry name" value="C-type_lectin-like"/>
</dbReference>
<dbReference type="InterPro" id="IPR016186">
    <property type="entry name" value="C-type_lectin-like/link_sf"/>
</dbReference>
<dbReference type="InterPro" id="IPR050828">
    <property type="entry name" value="C-type_lectin/matrix_domain"/>
</dbReference>
<dbReference type="InterPro" id="IPR016187">
    <property type="entry name" value="CTDL_fold"/>
</dbReference>
<dbReference type="InterPro" id="IPR033992">
    <property type="entry name" value="NKR-like_CTLD"/>
</dbReference>
<dbReference type="PANTHER" id="PTHR45710:SF19">
    <property type="entry name" value="C-TYPE LECTIN DOMAIN FAMILY 2 MEMBER D-RELATED"/>
    <property type="match status" value="1"/>
</dbReference>
<dbReference type="PANTHER" id="PTHR45710">
    <property type="entry name" value="C-TYPE LECTIN DOMAIN-CONTAINING PROTEIN 180"/>
    <property type="match status" value="1"/>
</dbReference>
<dbReference type="Pfam" id="PF00059">
    <property type="entry name" value="Lectin_C"/>
    <property type="match status" value="1"/>
</dbReference>
<dbReference type="SMART" id="SM00034">
    <property type="entry name" value="CLECT"/>
    <property type="match status" value="1"/>
</dbReference>
<dbReference type="SUPFAM" id="SSF56436">
    <property type="entry name" value="C-type lectin-like"/>
    <property type="match status" value="1"/>
</dbReference>
<dbReference type="PROSITE" id="PS50041">
    <property type="entry name" value="C_TYPE_LECTIN_2"/>
    <property type="match status" value="1"/>
</dbReference>
<comment type="function">
    <text evidence="1">Lectin-type cell surface receptor.</text>
</comment>
<comment type="subcellular location">
    <subcellularLocation>
        <location evidence="1">Cell membrane</location>
        <topology evidence="1">Single-pass type II membrane protein</topology>
    </subcellularLocation>
</comment>
<name>CL2D2_RAT</name>
<keyword id="KW-1003">Cell membrane</keyword>
<keyword id="KW-0325">Glycoprotein</keyword>
<keyword id="KW-0430">Lectin</keyword>
<keyword id="KW-0472">Membrane</keyword>
<keyword id="KW-0675">Receptor</keyword>
<keyword id="KW-1185">Reference proteome</keyword>
<keyword id="KW-0735">Signal-anchor</keyword>
<keyword id="KW-0812">Transmembrane</keyword>
<keyword id="KW-1133">Transmembrane helix</keyword>
<reference key="1">
    <citation type="journal article" date="2007" name="Immunity">
        <title>Cytomegalovirus evasion of innate immunity by subversion of the NKR-P1B:Ocil/Clr-b missing-self axis.</title>
        <authorList>
            <person name="Voigt S."/>
            <person name="Mesci A."/>
            <person name="Ettinger J."/>
            <person name="Fine J.H."/>
            <person name="Chen P."/>
            <person name="Chou W."/>
            <person name="Carlyle J.R."/>
        </authorList>
    </citation>
    <scope>NUCLEOTIDE SEQUENCE [MRNA]</scope>
    <source>
        <strain>Sprague-Dawley</strain>
    </source>
</reference>
<sequence length="233" mass="25559">MPSSAHLQDAPPLLSRTLTQDEEQTSLRQSSSCGLSAASASESLSGSTKSRIPHSKMLQGNLPRIISPESPAKLPCCYGVIMVLSVAVVALSVALSVKKTPQILTVKTYAACPRNWIGVGNKCYYFNETPSNWTFSQTLCKAQEAELARFDTEEELNFLKRHKGSSGYWIGLHRESSSQPWKWTDNTAYNNLVPIGGDEKHGFLSDNGFSSGRGYIVRKSICSKPNSYTSQCQ</sequence>
<feature type="chain" id="PRO_0000315292" description="C-type lectin domain family 2 member D2">
    <location>
        <begin position="1"/>
        <end position="233"/>
    </location>
</feature>
<feature type="topological domain" description="Cytoplasmic" evidence="2">
    <location>
        <begin position="1"/>
        <end position="76"/>
    </location>
</feature>
<feature type="transmembrane region" description="Helical; Signal-anchor for type II membrane protein" evidence="2">
    <location>
        <begin position="77"/>
        <end position="97"/>
    </location>
</feature>
<feature type="topological domain" description="Extracellular" evidence="2">
    <location>
        <begin position="98"/>
        <end position="233"/>
    </location>
</feature>
<feature type="domain" description="C-type lectin" evidence="3">
    <location>
        <begin position="119"/>
        <end position="228"/>
    </location>
</feature>
<feature type="region of interest" description="Disordered" evidence="4">
    <location>
        <begin position="1"/>
        <end position="34"/>
    </location>
</feature>
<feature type="glycosylation site" description="N-linked (GlcNAc...) asparagine" evidence="2">
    <location>
        <position position="132"/>
    </location>
</feature>